<feature type="chain" id="PRO_1000049049" description="Large ribosomal subunit protein bL20">
    <location>
        <begin position="1"/>
        <end position="119"/>
    </location>
</feature>
<dbReference type="EMBL" id="CP000463">
    <property type="protein sequence ID" value="ABJ04456.1"/>
    <property type="molecule type" value="Genomic_DNA"/>
</dbReference>
<dbReference type="SMR" id="Q07UC8"/>
<dbReference type="STRING" id="316055.RPE_0497"/>
<dbReference type="KEGG" id="rpe:RPE_0497"/>
<dbReference type="eggNOG" id="COG0292">
    <property type="taxonomic scope" value="Bacteria"/>
</dbReference>
<dbReference type="HOGENOM" id="CLU_123265_0_1_5"/>
<dbReference type="OrthoDB" id="9808966at2"/>
<dbReference type="GO" id="GO:1990904">
    <property type="term" value="C:ribonucleoprotein complex"/>
    <property type="evidence" value="ECO:0007669"/>
    <property type="project" value="UniProtKB-KW"/>
</dbReference>
<dbReference type="GO" id="GO:0005840">
    <property type="term" value="C:ribosome"/>
    <property type="evidence" value="ECO:0007669"/>
    <property type="project" value="UniProtKB-KW"/>
</dbReference>
<dbReference type="GO" id="GO:0019843">
    <property type="term" value="F:rRNA binding"/>
    <property type="evidence" value="ECO:0007669"/>
    <property type="project" value="UniProtKB-UniRule"/>
</dbReference>
<dbReference type="GO" id="GO:0003735">
    <property type="term" value="F:structural constituent of ribosome"/>
    <property type="evidence" value="ECO:0007669"/>
    <property type="project" value="InterPro"/>
</dbReference>
<dbReference type="GO" id="GO:0000027">
    <property type="term" value="P:ribosomal large subunit assembly"/>
    <property type="evidence" value="ECO:0007669"/>
    <property type="project" value="UniProtKB-UniRule"/>
</dbReference>
<dbReference type="GO" id="GO:0006412">
    <property type="term" value="P:translation"/>
    <property type="evidence" value="ECO:0007669"/>
    <property type="project" value="InterPro"/>
</dbReference>
<dbReference type="CDD" id="cd07026">
    <property type="entry name" value="Ribosomal_L20"/>
    <property type="match status" value="1"/>
</dbReference>
<dbReference type="FunFam" id="1.10.1900.20:FF:000001">
    <property type="entry name" value="50S ribosomal protein L20"/>
    <property type="match status" value="1"/>
</dbReference>
<dbReference type="Gene3D" id="6.10.160.10">
    <property type="match status" value="1"/>
</dbReference>
<dbReference type="Gene3D" id="1.10.1900.20">
    <property type="entry name" value="Ribosomal protein L20"/>
    <property type="match status" value="1"/>
</dbReference>
<dbReference type="HAMAP" id="MF_00382">
    <property type="entry name" value="Ribosomal_bL20"/>
    <property type="match status" value="1"/>
</dbReference>
<dbReference type="InterPro" id="IPR005813">
    <property type="entry name" value="Ribosomal_bL20"/>
</dbReference>
<dbReference type="InterPro" id="IPR049946">
    <property type="entry name" value="RIBOSOMAL_L20_CS"/>
</dbReference>
<dbReference type="InterPro" id="IPR035566">
    <property type="entry name" value="Ribosomal_protein_bL20_C"/>
</dbReference>
<dbReference type="NCBIfam" id="TIGR01032">
    <property type="entry name" value="rplT_bact"/>
    <property type="match status" value="1"/>
</dbReference>
<dbReference type="PANTHER" id="PTHR10986">
    <property type="entry name" value="39S RIBOSOMAL PROTEIN L20"/>
    <property type="match status" value="1"/>
</dbReference>
<dbReference type="Pfam" id="PF00453">
    <property type="entry name" value="Ribosomal_L20"/>
    <property type="match status" value="1"/>
</dbReference>
<dbReference type="PRINTS" id="PR00062">
    <property type="entry name" value="RIBOSOMALL20"/>
</dbReference>
<dbReference type="SUPFAM" id="SSF74731">
    <property type="entry name" value="Ribosomal protein L20"/>
    <property type="match status" value="1"/>
</dbReference>
<dbReference type="PROSITE" id="PS00937">
    <property type="entry name" value="RIBOSOMAL_L20"/>
    <property type="match status" value="1"/>
</dbReference>
<reference key="1">
    <citation type="submission" date="2006-09" db="EMBL/GenBank/DDBJ databases">
        <title>Complete sequence of Rhodopseudomonas palustris BisA53.</title>
        <authorList>
            <consortium name="US DOE Joint Genome Institute"/>
            <person name="Copeland A."/>
            <person name="Lucas S."/>
            <person name="Lapidus A."/>
            <person name="Barry K."/>
            <person name="Detter J.C."/>
            <person name="Glavina del Rio T."/>
            <person name="Hammon N."/>
            <person name="Israni S."/>
            <person name="Dalin E."/>
            <person name="Tice H."/>
            <person name="Pitluck S."/>
            <person name="Chain P."/>
            <person name="Malfatti S."/>
            <person name="Shin M."/>
            <person name="Vergez L."/>
            <person name="Schmutz J."/>
            <person name="Larimer F."/>
            <person name="Land M."/>
            <person name="Hauser L."/>
            <person name="Pelletier D.A."/>
            <person name="Kyrpides N."/>
            <person name="Kim E."/>
            <person name="Harwood C.S."/>
            <person name="Oda Y."/>
            <person name="Richardson P."/>
        </authorList>
    </citation>
    <scope>NUCLEOTIDE SEQUENCE [LARGE SCALE GENOMIC DNA]</scope>
    <source>
        <strain>BisA53</strain>
    </source>
</reference>
<evidence type="ECO:0000255" key="1">
    <source>
        <dbReference type="HAMAP-Rule" id="MF_00382"/>
    </source>
</evidence>
<evidence type="ECO:0000305" key="2"/>
<sequence>MARVKRGVTAHAKHKKVYKAAKGFRGRRKNTIRAAKAAVDKAGQYAFRDRKRKKRTFRALWIQRINAAVRPLGMTYSVFINGLAKSGVIVDRKVLSDLAIHEPVAFQAIAEKAKAALAA</sequence>
<gene>
    <name evidence="1" type="primary">rplT</name>
    <name type="ordered locus">RPE_0497</name>
</gene>
<keyword id="KW-0687">Ribonucleoprotein</keyword>
<keyword id="KW-0689">Ribosomal protein</keyword>
<keyword id="KW-0694">RNA-binding</keyword>
<keyword id="KW-0699">rRNA-binding</keyword>
<name>RL20_RHOP5</name>
<comment type="function">
    <text evidence="1">Binds directly to 23S ribosomal RNA and is necessary for the in vitro assembly process of the 50S ribosomal subunit. It is not involved in the protein synthesizing functions of that subunit.</text>
</comment>
<comment type="similarity">
    <text evidence="1">Belongs to the bacterial ribosomal protein bL20 family.</text>
</comment>
<protein>
    <recommendedName>
        <fullName evidence="1">Large ribosomal subunit protein bL20</fullName>
    </recommendedName>
    <alternativeName>
        <fullName evidence="2">50S ribosomal protein L20</fullName>
    </alternativeName>
</protein>
<organism>
    <name type="scientific">Rhodopseudomonas palustris (strain BisA53)</name>
    <dbReference type="NCBI Taxonomy" id="316055"/>
    <lineage>
        <taxon>Bacteria</taxon>
        <taxon>Pseudomonadati</taxon>
        <taxon>Pseudomonadota</taxon>
        <taxon>Alphaproteobacteria</taxon>
        <taxon>Hyphomicrobiales</taxon>
        <taxon>Nitrobacteraceae</taxon>
        <taxon>Rhodopseudomonas</taxon>
    </lineage>
</organism>
<proteinExistence type="inferred from homology"/>
<accession>Q07UC8</accession>